<keyword id="KW-1015">Disulfide bond</keyword>
<keyword id="KW-0325">Glycoprotein</keyword>
<keyword id="KW-0964">Secreted</keyword>
<keyword id="KW-0732">Signal</keyword>
<keyword id="KW-0758">Storage protein</keyword>
<sequence>MMWKTLLCCLLAVSAAALDGWEPGKRYEYHVRGRTLTALHEVANQYSGFRFKGKLVIEPHTPSVLRGQLKDTYHMTVHRMLPDGWDQKFEERESNWERVGMKNKPFEVHVGNEFQFNKLIVTEDTPVWETNMIKGVLSQIQVNLKEVGPDPRDEQEDRLRKIFKVHESSVTGRCEVLYDITPITKFNMLPQPLVEIEEENVNVLQVMKTQNFTDCKKLPSYVHGFYNFHNVFPAQNKAGFMSRSQQTRTIVSRNKETGRFTIRSSVTFHEVVLKPELFNSQQGISVSRMNVTLEEIKSQQHIPPPRPPKDVGDLVYRYSAETGEPSQRDSAYALESNSDSSSSSSSSSSEENAANSRHRSSSSSSSSRSSEEMRDSKKHPRASTTESQPRNSRSRRSLQNSKRSINMYNDSSSSSSSSSSEEYLLPRPHIENAPNIPFMPYFVGNQGSKIGEVDPEKIVLLARTISSELQEPDTMVKKNILSRFSILTNLVRAASFSQLEEATKRLYYRVERADNGDESKLDAWKAYRDSVAQAGTPAALKMVHTWIRKEYIKDEEAAKVVAVIPHAADTPTDNYIAYFFEMVKDPVVHGEKYLNSSAVLAFSKLLRLAAVDSEAVRRYPVHVFGRMVPKNFSARVKEYIEYFANKLKNAVKDKDSHKIQVYTRALGNTGHADIIRHFEPYLVGRESVSTHERVTMVFCLDEFVKTQPSVAQYILLRLFENVGETQEIRVAALYLLMKTDVSAELFQRLAEYTKFDKNHQVVSAVQSAIRSAAKVEGPYKKETAKNAQAAVKILSSKPYDDSYSKSFILNNYRREIDVGYSRLYNQIGSRDSFMPKSVFYKLVNIIDGDRDDQAKFGGAVSSVRDVIDFIRQQFKKDDSQDELENSKYAEDDDIWDLREIANLLEMEEENVDPLEGNVHYDYFGAQRFFTLNKTSFEFREELKKYFKKPQITNINKLYNRMELKVGYPNVMGVPFFFTFKRPTLVKLTAKTFIMPLKPCDHGKPHKFPRIFNVTSDVSFVYSFDMHSHMGVVAPFNKKEYVTGIQRKHMIQIPLNVSVHVNLDKNKVAADFKPYYEDNFKVAEARGIPFTTVHDIKSLVPYVEAEHTSYIRVRPSKAYEGNFGKSVGMVYHYNFETDQQFFDYKWFSSNYFLHYPNVAFYYGWEAQPVFYYDFKLYLDSHNSPAKTVQLKASYDNRYTQPEEEEETRQHSKIRRPRSASRKHRRSRHEERAPLENLEVSDTETQREELYDIVLPAVRAGRLYYASVSVAFKGEENVYSKYEVEGALASSQVNEHISTMLRAHSNDAERKHQYAHVRVNVTMPQVPVIDYRKALEFDPTSKIQCEVHFGDTPEKKSKVYFQGKFERTDERKKFVAESDMAQLCSAQQNNKNYLLPACRNVTEEASKLDKYFFKVKYENLSEKCRNRTYKAYSYLRHYFFPYITENVYPDERKTDSVEVQVQFNEEINAVNVSVKAPILNVEFTDVRVYNKYARALFSLNPRYPLLSQVAKTAFPQYYEPTCVVDYSKVNTFDNRTYEHDMLNDWVEVMFHKPRSKIYKQVSVSAKQAHSKMVLKVLRGDEVKFEMKQPRDSSSSPELKMNDKVIEYERSPAFIHYKHELIAVAYALPSKALHLDLLNDSLVFVYDGERVMLHAGNHYRNQVRGLCGTFDGEPSTDFKAPQNCHVRDVEDLILAYTLVRDLDRSRLRDENICVREDVQLVNLTNHRHAEKSGIRPYDIDDDSSSSSSSSSSSSSSSSSSKSNSTSSSSSESNESALPRGENKLHRAQQPSRNCHMHLHRIVTHNGKQCISKLALTECAPLCREESHTTKTEAFVCFPPGPTADHYTKLVRKGVSPDFSRKTDIVNLRVTIPSRCVSKI</sequence>
<name>VIT2_PERAM</name>
<accession>Q9BPS0</accession>
<comment type="function">
    <text evidence="1">Precursor of the egg-yolk proteins that are sources of nutrients during embryonic development.</text>
</comment>
<comment type="subcellular location">
    <subcellularLocation>
        <location evidence="1">Secreted</location>
    </subcellularLocation>
</comment>
<gene>
    <name type="primary">VG2</name>
</gene>
<evidence type="ECO:0000250" key="1"/>
<evidence type="ECO:0000255" key="2"/>
<evidence type="ECO:0000255" key="3">
    <source>
        <dbReference type="PROSITE-ProRule" id="PRU00557"/>
    </source>
</evidence>
<evidence type="ECO:0000255" key="4">
    <source>
        <dbReference type="PROSITE-ProRule" id="PRU00580"/>
    </source>
</evidence>
<evidence type="ECO:0000256" key="5">
    <source>
        <dbReference type="SAM" id="MobiDB-lite"/>
    </source>
</evidence>
<reference key="1">
    <citation type="submission" date="2000-08" db="EMBL/GenBank/DDBJ databases">
        <title>Periplaneta americana vitellogenin-2 (Vg-2).</title>
        <authorList>
            <person name="Tufail M."/>
            <person name="Hatakeyama M."/>
            <person name="Takeda M."/>
            <person name="Lee J.M."/>
        </authorList>
    </citation>
    <scope>NUCLEOTIDE SEQUENCE [MRNA]</scope>
    <source>
        <tissue>Fat body</tissue>
    </source>
</reference>
<protein>
    <recommendedName>
        <fullName>Vitellogenin-2</fullName>
        <shortName>Vg-2</shortName>
    </recommendedName>
</protein>
<organism>
    <name type="scientific">Periplaneta americana</name>
    <name type="common">American cockroach</name>
    <name type="synonym">Blatta americana</name>
    <dbReference type="NCBI Taxonomy" id="6978"/>
    <lineage>
        <taxon>Eukaryota</taxon>
        <taxon>Metazoa</taxon>
        <taxon>Ecdysozoa</taxon>
        <taxon>Arthropoda</taxon>
        <taxon>Hexapoda</taxon>
        <taxon>Insecta</taxon>
        <taxon>Pterygota</taxon>
        <taxon>Neoptera</taxon>
        <taxon>Polyneoptera</taxon>
        <taxon>Dictyoptera</taxon>
        <taxon>Blattodea</taxon>
        <taxon>Blattoidea</taxon>
        <taxon>Blattidae</taxon>
        <taxon>Blattinae</taxon>
        <taxon>Periplaneta</taxon>
    </lineage>
</organism>
<feature type="signal peptide" evidence="2">
    <location>
        <begin position="1"/>
        <end position="16"/>
    </location>
</feature>
<feature type="chain" id="PRO_0000041551" description="Vitellogenin-2">
    <location>
        <begin position="17"/>
        <end position="1876"/>
    </location>
</feature>
<feature type="domain" description="Vitellogenin" evidence="3">
    <location>
        <begin position="21"/>
        <end position="838"/>
    </location>
</feature>
<feature type="domain" description="VWFD" evidence="4">
    <location>
        <begin position="1518"/>
        <end position="1703"/>
    </location>
</feature>
<feature type="region of interest" description="Disordered" evidence="5">
    <location>
        <begin position="322"/>
        <end position="424"/>
    </location>
</feature>
<feature type="region of interest" description="Disordered" evidence="5">
    <location>
        <begin position="1192"/>
        <end position="1239"/>
    </location>
</feature>
<feature type="region of interest" description="Disordered" evidence="5">
    <location>
        <begin position="1729"/>
        <end position="1788"/>
    </location>
</feature>
<feature type="compositionally biased region" description="Low complexity" evidence="5">
    <location>
        <begin position="330"/>
        <end position="368"/>
    </location>
</feature>
<feature type="compositionally biased region" description="Low complexity" evidence="5">
    <location>
        <begin position="387"/>
        <end position="404"/>
    </location>
</feature>
<feature type="compositionally biased region" description="Low complexity" evidence="5">
    <location>
        <begin position="411"/>
        <end position="420"/>
    </location>
</feature>
<feature type="compositionally biased region" description="Basic residues" evidence="5">
    <location>
        <begin position="1209"/>
        <end position="1225"/>
    </location>
</feature>
<feature type="compositionally biased region" description="Low complexity" evidence="5">
    <location>
        <begin position="1741"/>
        <end position="1772"/>
    </location>
</feature>
<feature type="glycosylation site" description="N-linked (GlcNAc...) asparagine" evidence="2">
    <location>
        <position position="211"/>
    </location>
</feature>
<feature type="glycosylation site" description="N-linked (GlcNAc...) asparagine" evidence="2">
    <location>
        <position position="290"/>
    </location>
</feature>
<feature type="glycosylation site" description="N-linked (GlcNAc...) asparagine" evidence="2">
    <location>
        <position position="409"/>
    </location>
</feature>
<feature type="glycosylation site" description="N-linked (GlcNAc...) asparagine" evidence="2">
    <location>
        <position position="595"/>
    </location>
</feature>
<feature type="glycosylation site" description="N-linked (GlcNAc...) asparagine" evidence="2">
    <location>
        <position position="631"/>
    </location>
</feature>
<feature type="glycosylation site" description="N-linked (GlcNAc...) asparagine" evidence="2">
    <location>
        <position position="932"/>
    </location>
</feature>
<feature type="glycosylation site" description="N-linked (GlcNAc...) asparagine" evidence="2">
    <location>
        <position position="1012"/>
    </location>
</feature>
<feature type="glycosylation site" description="N-linked (GlcNAc...) asparagine" evidence="2">
    <location>
        <position position="1055"/>
    </location>
</feature>
<feature type="glycosylation site" description="N-linked (GlcNAc...) asparagine" evidence="2">
    <location>
        <position position="1318"/>
    </location>
</feature>
<feature type="glycosylation site" description="N-linked (GlcNAc...) asparagine" evidence="2">
    <location>
        <position position="1398"/>
    </location>
</feature>
<feature type="glycosylation site" description="N-linked (GlcNAc...) asparagine" evidence="2">
    <location>
        <position position="1417"/>
    </location>
</feature>
<feature type="glycosylation site" description="N-linked (GlcNAc...) asparagine" evidence="2">
    <location>
        <position position="1424"/>
    </location>
</feature>
<feature type="glycosylation site" description="N-linked (GlcNAc...) asparagine" evidence="2">
    <location>
        <position position="1469"/>
    </location>
</feature>
<feature type="glycosylation site" description="N-linked (GlcNAc...) asparagine" evidence="2">
    <location>
        <position position="1532"/>
    </location>
</feature>
<feature type="glycosylation site" description="N-linked (GlcNAc...) asparagine" evidence="2">
    <location>
        <position position="1636"/>
    </location>
</feature>
<feature type="glycosylation site" description="N-linked (GlcNAc...) asparagine" evidence="2">
    <location>
        <position position="1719"/>
    </location>
</feature>
<feature type="glycosylation site" description="N-linked (GlcNAc...) asparagine" evidence="2">
    <location>
        <position position="1760"/>
    </location>
</feature>
<feature type="glycosylation site" description="N-linked (GlcNAc...) asparagine" evidence="2">
    <location>
        <position position="1770"/>
    </location>
</feature>
<feature type="disulfide bond" evidence="4">
    <location>
        <begin position="1520"/>
        <end position="1664"/>
    </location>
</feature>
<dbReference type="EMBL" id="AB047401">
    <property type="protein sequence ID" value="BAB32673.1"/>
    <property type="molecule type" value="mRNA"/>
</dbReference>
<dbReference type="SMR" id="Q9BPS0"/>
<dbReference type="GlyCosmos" id="Q9BPS0">
    <property type="glycosylation" value="18 sites, No reported glycans"/>
</dbReference>
<dbReference type="GO" id="GO:0005576">
    <property type="term" value="C:extracellular region"/>
    <property type="evidence" value="ECO:0007669"/>
    <property type="project" value="UniProtKB-SubCell"/>
</dbReference>
<dbReference type="GO" id="GO:0005319">
    <property type="term" value="F:lipid transporter activity"/>
    <property type="evidence" value="ECO:0007669"/>
    <property type="project" value="InterPro"/>
</dbReference>
<dbReference type="GO" id="GO:0045735">
    <property type="term" value="F:nutrient reservoir activity"/>
    <property type="evidence" value="ECO:0007669"/>
    <property type="project" value="UniProtKB-KW"/>
</dbReference>
<dbReference type="Gene3D" id="2.30.230.10">
    <property type="entry name" value="Lipovitellin, beta-sheet shell regions, chain A"/>
    <property type="match status" value="1"/>
</dbReference>
<dbReference type="Gene3D" id="2.20.80.10">
    <property type="entry name" value="Lipovitellin-phosvitin complex, chain A, domain 4"/>
    <property type="match status" value="1"/>
</dbReference>
<dbReference type="Gene3D" id="1.25.10.20">
    <property type="entry name" value="Vitellinogen, superhelical"/>
    <property type="match status" value="1"/>
</dbReference>
<dbReference type="InterPro" id="IPR015819">
    <property type="entry name" value="Lipid_transp_b-sht_shell"/>
</dbReference>
<dbReference type="InterPro" id="IPR011030">
    <property type="entry name" value="Lipovitellin_superhlx_dom"/>
</dbReference>
<dbReference type="InterPro" id="IPR015816">
    <property type="entry name" value="Vitellinogen_b-sht_N"/>
</dbReference>
<dbReference type="InterPro" id="IPR015255">
    <property type="entry name" value="Vitellinogen_open_b-sht"/>
</dbReference>
<dbReference type="InterPro" id="IPR050733">
    <property type="entry name" value="Vitellogenin/Apolipophorin"/>
</dbReference>
<dbReference type="InterPro" id="IPR001747">
    <property type="entry name" value="Vitellogenin_N"/>
</dbReference>
<dbReference type="InterPro" id="IPR001846">
    <property type="entry name" value="VWF_type-D"/>
</dbReference>
<dbReference type="PANTHER" id="PTHR23345:SF15">
    <property type="entry name" value="VITELLOGENIN 1-RELATED"/>
    <property type="match status" value="1"/>
</dbReference>
<dbReference type="PANTHER" id="PTHR23345">
    <property type="entry name" value="VITELLOGENIN-RELATED"/>
    <property type="match status" value="1"/>
</dbReference>
<dbReference type="Pfam" id="PF09172">
    <property type="entry name" value="Vit_open_b-sht"/>
    <property type="match status" value="1"/>
</dbReference>
<dbReference type="Pfam" id="PF01347">
    <property type="entry name" value="Vitellogenin_N"/>
    <property type="match status" value="1"/>
</dbReference>
<dbReference type="Pfam" id="PF00094">
    <property type="entry name" value="VWD"/>
    <property type="match status" value="1"/>
</dbReference>
<dbReference type="SMART" id="SM01169">
    <property type="entry name" value="DUF1943"/>
    <property type="match status" value="1"/>
</dbReference>
<dbReference type="SMART" id="SM00638">
    <property type="entry name" value="LPD_N"/>
    <property type="match status" value="1"/>
</dbReference>
<dbReference type="SMART" id="SM00216">
    <property type="entry name" value="VWD"/>
    <property type="match status" value="1"/>
</dbReference>
<dbReference type="SUPFAM" id="SSF56968">
    <property type="entry name" value="Lipovitellin-phosvitin complex, beta-sheet shell regions"/>
    <property type="match status" value="2"/>
</dbReference>
<dbReference type="SUPFAM" id="SSF48431">
    <property type="entry name" value="Lipovitellin-phosvitin complex, superhelical domain"/>
    <property type="match status" value="1"/>
</dbReference>
<dbReference type="PROSITE" id="PS51211">
    <property type="entry name" value="VITELLOGENIN"/>
    <property type="match status" value="1"/>
</dbReference>
<dbReference type="PROSITE" id="PS51233">
    <property type="entry name" value="VWFD"/>
    <property type="match status" value="1"/>
</dbReference>
<proteinExistence type="evidence at transcript level"/>